<comment type="catalytic activity">
    <reaction evidence="1">
        <text>tRNA(Gly) + glycine + ATP = glycyl-tRNA(Gly) + AMP + diphosphate</text>
        <dbReference type="Rhea" id="RHEA:16013"/>
        <dbReference type="Rhea" id="RHEA-COMP:9664"/>
        <dbReference type="Rhea" id="RHEA-COMP:9683"/>
        <dbReference type="ChEBI" id="CHEBI:30616"/>
        <dbReference type="ChEBI" id="CHEBI:33019"/>
        <dbReference type="ChEBI" id="CHEBI:57305"/>
        <dbReference type="ChEBI" id="CHEBI:78442"/>
        <dbReference type="ChEBI" id="CHEBI:78522"/>
        <dbReference type="ChEBI" id="CHEBI:456215"/>
        <dbReference type="EC" id="6.1.1.14"/>
    </reaction>
</comment>
<comment type="subunit">
    <text evidence="1">Tetramer of two alpha and two beta subunits.</text>
</comment>
<comment type="subcellular location">
    <subcellularLocation>
        <location evidence="1">Cytoplasm</location>
    </subcellularLocation>
</comment>
<comment type="similarity">
    <text evidence="1">Belongs to the class-II aminoacyl-tRNA synthetase family.</text>
</comment>
<sequence>MSENTFLVEIGTEELPPKALRSLAESFAANVTAELDNAGLAHGKVEWFAAPRRLALKVANLAAAQADREVEKRGPAIAQAFDAEGKPSKAAEGWARGCGITVDQAERLTTDKGEWLLYRAHVKGESTEALLPNMIASSLAKLPIPKLMRWGASDVHFVRPVHTVTLLLGDKVIPATILGIPSDRVIRGHRFMGEPEFTIDHADQYPQILLERGKVIADYEQRKAKIKADAQEAARKIGGQADLSESLLEEVTSLVEWPVVLTAKFEEKFLAVPSEALVYTMKGDQKYFPVYDNAGKLLPNFIFVANIESKDPQQIISGNEKVVRPRLADAEFFFNTDRKKRLEDNLPRLETVLFQQQLGTLRDKTDRIQALAGWIAEQIGADVNHATRAGLLSKCDLMTNMVFEFTDTQGVMGMHYARHDGEAEDVAVALNEQYQPRFAGDALPSNPVACAVAIADKMDTLAGIFGIGQHPKGDKDPFALRRAALGVLRIIVEKNLDLDLQTLTEEAVRLYGEKLTNANVVDDVIDFMLGRFRAWYQDEGYGVDTIQAVLARRPTRPADFDARMKAVSHFRTLEESSALAAANKRVSNILAKSDETLNDIVHASVLKEAAEIKLAGNLVVLRDKLQPYFAAGRYQDALIELAALREPVDEFFENVMVNAEDKDVRINRLTLLSKLRELFLQVADISLLQ</sequence>
<name>SYGB_KLEP7</name>
<keyword id="KW-0030">Aminoacyl-tRNA synthetase</keyword>
<keyword id="KW-0067">ATP-binding</keyword>
<keyword id="KW-0963">Cytoplasm</keyword>
<keyword id="KW-0436">Ligase</keyword>
<keyword id="KW-0547">Nucleotide-binding</keyword>
<keyword id="KW-0648">Protein biosynthesis</keyword>
<proteinExistence type="inferred from homology"/>
<gene>
    <name evidence="1" type="primary">glyS</name>
    <name type="ordered locus">KPN78578_38840</name>
    <name type="ORF">KPN_03922</name>
</gene>
<organism>
    <name type="scientific">Klebsiella pneumoniae subsp. pneumoniae (strain ATCC 700721 / MGH 78578)</name>
    <dbReference type="NCBI Taxonomy" id="272620"/>
    <lineage>
        <taxon>Bacteria</taxon>
        <taxon>Pseudomonadati</taxon>
        <taxon>Pseudomonadota</taxon>
        <taxon>Gammaproteobacteria</taxon>
        <taxon>Enterobacterales</taxon>
        <taxon>Enterobacteriaceae</taxon>
        <taxon>Klebsiella/Raoultella group</taxon>
        <taxon>Klebsiella</taxon>
        <taxon>Klebsiella pneumoniae complex</taxon>
    </lineage>
</organism>
<dbReference type="EC" id="6.1.1.14" evidence="1"/>
<dbReference type="EMBL" id="CP000647">
    <property type="protein sequence ID" value="ABR79308.1"/>
    <property type="molecule type" value="Genomic_DNA"/>
</dbReference>
<dbReference type="RefSeq" id="WP_002922127.1">
    <property type="nucleotide sequence ID" value="NC_009648.1"/>
</dbReference>
<dbReference type="SMR" id="A6TFH4"/>
<dbReference type="STRING" id="272620.KPN_03922"/>
<dbReference type="jPOST" id="A6TFH4"/>
<dbReference type="PaxDb" id="272620-KPN_03922"/>
<dbReference type="EnsemblBacteria" id="ABR79308">
    <property type="protein sequence ID" value="ABR79308"/>
    <property type="gene ID" value="KPN_03922"/>
</dbReference>
<dbReference type="KEGG" id="kpn:KPN_03922"/>
<dbReference type="HOGENOM" id="CLU_007220_2_2_6"/>
<dbReference type="Proteomes" id="UP000000265">
    <property type="component" value="Chromosome"/>
</dbReference>
<dbReference type="GO" id="GO:0005829">
    <property type="term" value="C:cytosol"/>
    <property type="evidence" value="ECO:0007669"/>
    <property type="project" value="TreeGrafter"/>
</dbReference>
<dbReference type="GO" id="GO:0004814">
    <property type="term" value="F:arginine-tRNA ligase activity"/>
    <property type="evidence" value="ECO:0007669"/>
    <property type="project" value="InterPro"/>
</dbReference>
<dbReference type="GO" id="GO:0005524">
    <property type="term" value="F:ATP binding"/>
    <property type="evidence" value="ECO:0007669"/>
    <property type="project" value="UniProtKB-UniRule"/>
</dbReference>
<dbReference type="GO" id="GO:0004820">
    <property type="term" value="F:glycine-tRNA ligase activity"/>
    <property type="evidence" value="ECO:0007669"/>
    <property type="project" value="UniProtKB-UniRule"/>
</dbReference>
<dbReference type="GO" id="GO:0006420">
    <property type="term" value="P:arginyl-tRNA aminoacylation"/>
    <property type="evidence" value="ECO:0007669"/>
    <property type="project" value="InterPro"/>
</dbReference>
<dbReference type="GO" id="GO:0006426">
    <property type="term" value="P:glycyl-tRNA aminoacylation"/>
    <property type="evidence" value="ECO:0007669"/>
    <property type="project" value="UniProtKB-UniRule"/>
</dbReference>
<dbReference type="HAMAP" id="MF_00255">
    <property type="entry name" value="Gly_tRNA_synth_beta"/>
    <property type="match status" value="1"/>
</dbReference>
<dbReference type="InterPro" id="IPR008909">
    <property type="entry name" value="DALR_anticod-bd"/>
</dbReference>
<dbReference type="InterPro" id="IPR015944">
    <property type="entry name" value="Gly-tRNA-synth_bsu"/>
</dbReference>
<dbReference type="InterPro" id="IPR006194">
    <property type="entry name" value="Gly-tRNA-synth_heterodimer"/>
</dbReference>
<dbReference type="NCBIfam" id="TIGR00211">
    <property type="entry name" value="glyS"/>
    <property type="match status" value="1"/>
</dbReference>
<dbReference type="PANTHER" id="PTHR30075:SF2">
    <property type="entry name" value="GLYCINE--TRNA LIGASE, CHLOROPLASTIC_MITOCHONDRIAL 2"/>
    <property type="match status" value="1"/>
</dbReference>
<dbReference type="PANTHER" id="PTHR30075">
    <property type="entry name" value="GLYCYL-TRNA SYNTHETASE"/>
    <property type="match status" value="1"/>
</dbReference>
<dbReference type="Pfam" id="PF05746">
    <property type="entry name" value="DALR_1"/>
    <property type="match status" value="1"/>
</dbReference>
<dbReference type="Pfam" id="PF02092">
    <property type="entry name" value="tRNA_synt_2f"/>
    <property type="match status" value="1"/>
</dbReference>
<dbReference type="PRINTS" id="PR01045">
    <property type="entry name" value="TRNASYNTHGB"/>
</dbReference>
<dbReference type="SUPFAM" id="SSF109604">
    <property type="entry name" value="HD-domain/PDEase-like"/>
    <property type="match status" value="1"/>
</dbReference>
<dbReference type="PROSITE" id="PS50861">
    <property type="entry name" value="AA_TRNA_LIGASE_II_GLYAB"/>
    <property type="match status" value="1"/>
</dbReference>
<feature type="chain" id="PRO_1000006370" description="Glycine--tRNA ligase beta subunit">
    <location>
        <begin position="1"/>
        <end position="689"/>
    </location>
</feature>
<reference key="1">
    <citation type="submission" date="2006-09" db="EMBL/GenBank/DDBJ databases">
        <authorList>
            <consortium name="The Klebsiella pneumonia Genome Sequencing Project"/>
            <person name="McClelland M."/>
            <person name="Sanderson E.K."/>
            <person name="Spieth J."/>
            <person name="Clifton W.S."/>
            <person name="Latreille P."/>
            <person name="Sabo A."/>
            <person name="Pepin K."/>
            <person name="Bhonagiri V."/>
            <person name="Porwollik S."/>
            <person name="Ali J."/>
            <person name="Wilson R.K."/>
        </authorList>
    </citation>
    <scope>NUCLEOTIDE SEQUENCE [LARGE SCALE GENOMIC DNA]</scope>
    <source>
        <strain>ATCC 700721 / MGH 78578</strain>
    </source>
</reference>
<protein>
    <recommendedName>
        <fullName evidence="1">Glycine--tRNA ligase beta subunit</fullName>
        <ecNumber evidence="1">6.1.1.14</ecNumber>
    </recommendedName>
    <alternativeName>
        <fullName evidence="1">Glycyl-tRNA synthetase beta subunit</fullName>
        <shortName evidence="1">GlyRS</shortName>
    </alternativeName>
</protein>
<accession>A6TFH4</accession>
<evidence type="ECO:0000255" key="1">
    <source>
        <dbReference type="HAMAP-Rule" id="MF_00255"/>
    </source>
</evidence>